<dbReference type="EMBL" id="BC045065">
    <property type="protein sequence ID" value="AAH45065.1"/>
    <property type="molecule type" value="mRNA"/>
</dbReference>
<dbReference type="RefSeq" id="NP_001080049.1">
    <property type="nucleotide sequence ID" value="NM_001086580.1"/>
</dbReference>
<dbReference type="SMR" id="Q7ZXB7"/>
<dbReference type="DNASU" id="379741"/>
<dbReference type="AGR" id="Xenbase:XB-GENE-6254952"/>
<dbReference type="Xenbase" id="XB-GENE-6254952">
    <property type="gene designation" value="lamtor2.S"/>
</dbReference>
<dbReference type="OMA" id="WAAYEKN"/>
<dbReference type="OrthoDB" id="271745at2759"/>
<dbReference type="Proteomes" id="UP000186698">
    <property type="component" value="Unplaced"/>
</dbReference>
<dbReference type="Bgee" id="379741">
    <property type="expression patterns" value="Expressed in heart and 19 other cell types or tissues"/>
</dbReference>
<dbReference type="GO" id="GO:0005770">
    <property type="term" value="C:late endosome"/>
    <property type="evidence" value="ECO:0000250"/>
    <property type="project" value="UniProtKB"/>
</dbReference>
<dbReference type="GO" id="GO:0031902">
    <property type="term" value="C:late endosome membrane"/>
    <property type="evidence" value="ECO:0007669"/>
    <property type="project" value="UniProtKB-SubCell"/>
</dbReference>
<dbReference type="GO" id="GO:0005765">
    <property type="term" value="C:lysosomal membrane"/>
    <property type="evidence" value="ECO:0000250"/>
    <property type="project" value="UniProtKB"/>
</dbReference>
<dbReference type="GO" id="GO:0071986">
    <property type="term" value="C:Ragulator complex"/>
    <property type="evidence" value="ECO:0000250"/>
    <property type="project" value="UniProtKB"/>
</dbReference>
<dbReference type="GO" id="GO:0005085">
    <property type="term" value="F:guanyl-nucleotide exchange factor activity"/>
    <property type="evidence" value="ECO:0007669"/>
    <property type="project" value="InterPro"/>
</dbReference>
<dbReference type="GO" id="GO:0060090">
    <property type="term" value="F:molecular adaptor activity"/>
    <property type="evidence" value="ECO:0007669"/>
    <property type="project" value="InterPro"/>
</dbReference>
<dbReference type="GO" id="GO:0071230">
    <property type="term" value="P:cellular response to amino acid stimulus"/>
    <property type="evidence" value="ECO:0000250"/>
    <property type="project" value="UniProtKB"/>
</dbReference>
<dbReference type="GO" id="GO:0032008">
    <property type="term" value="P:positive regulation of TOR signaling"/>
    <property type="evidence" value="ECO:0000250"/>
    <property type="project" value="UniProtKB"/>
</dbReference>
<dbReference type="GO" id="GO:1904263">
    <property type="term" value="P:positive regulation of TORC1 signaling"/>
    <property type="evidence" value="ECO:0000250"/>
    <property type="project" value="UniProtKB"/>
</dbReference>
<dbReference type="GO" id="GO:0008104">
    <property type="term" value="P:protein localization"/>
    <property type="evidence" value="ECO:0000250"/>
    <property type="project" value="UniProtKB"/>
</dbReference>
<dbReference type="GO" id="GO:0001558">
    <property type="term" value="P:regulation of cell growth"/>
    <property type="evidence" value="ECO:0000250"/>
    <property type="project" value="UniProtKB"/>
</dbReference>
<dbReference type="FunFam" id="3.30.450.30:FF:000004">
    <property type="entry name" value="ragulator complex protein LAMTOR2"/>
    <property type="match status" value="1"/>
</dbReference>
<dbReference type="Gene3D" id="3.30.450.30">
    <property type="entry name" value="Dynein light chain 2a, cytoplasmic"/>
    <property type="match status" value="1"/>
</dbReference>
<dbReference type="InterPro" id="IPR037587">
    <property type="entry name" value="LAMTOR2-like"/>
</dbReference>
<dbReference type="InterPro" id="IPR004942">
    <property type="entry name" value="Roadblock/LAMTOR2_dom"/>
</dbReference>
<dbReference type="PANTHER" id="PTHR13323">
    <property type="entry name" value="LATE ENDOSOMAL/LYSOSOMAL MP1 INTERACTING PROTEIN"/>
    <property type="match status" value="1"/>
</dbReference>
<dbReference type="Pfam" id="PF03259">
    <property type="entry name" value="Robl_LC7"/>
    <property type="match status" value="1"/>
</dbReference>
<dbReference type="SMART" id="SM00960">
    <property type="entry name" value="Robl_LC7"/>
    <property type="match status" value="1"/>
</dbReference>
<dbReference type="SUPFAM" id="SSF103196">
    <property type="entry name" value="Roadblock/LC7 domain"/>
    <property type="match status" value="1"/>
</dbReference>
<reference key="1">
    <citation type="submission" date="2003-01" db="EMBL/GenBank/DDBJ databases">
        <authorList>
            <consortium name="NIH - Xenopus Gene Collection (XGC) project"/>
        </authorList>
    </citation>
    <scope>NUCLEOTIDE SEQUENCE [LARGE SCALE MRNA]</scope>
    <source>
        <tissue>Embryo</tissue>
    </source>
</reference>
<accession>Q7ZXB7</accession>
<gene>
    <name type="primary">lamtor2-b</name>
    <name type="synonym">robld3</name>
</gene>
<keyword id="KW-0967">Endosome</keyword>
<keyword id="KW-0458">Lysosome</keyword>
<keyword id="KW-0472">Membrane</keyword>
<keyword id="KW-1185">Reference proteome</keyword>
<sequence>MLRPKALTQVLSQANTGGVQSTLLLNNEGSLLAYSGYGDTDARVTAAIASNIWAAYDKNGHQAFNEDNLKFILMDCMEGRVAITRVSNLLLCMYAKETVGFGMLKAKAQALVHYLEEPLNQVSSS</sequence>
<feature type="chain" id="PRO_0000365943" description="Ragulator complex protein LAMTOR2-B">
    <location>
        <begin position="1"/>
        <end position="125"/>
    </location>
</feature>
<protein>
    <recommendedName>
        <fullName>Ragulator complex protein LAMTOR2-B</fullName>
    </recommendedName>
    <alternativeName>
        <fullName>Late endosomal/lysosomal adaptor and MAPK and MTOR activator 2-B</fullName>
    </alternativeName>
    <alternativeName>
        <fullName>Roadblock domain-containing protein 3</fullName>
    </alternativeName>
</protein>
<proteinExistence type="evidence at transcript level"/>
<name>LTR2B_XENLA</name>
<evidence type="ECO:0000250" key="1">
    <source>
        <dbReference type="UniProtKB" id="Q9JHS3"/>
    </source>
</evidence>
<evidence type="ECO:0000250" key="2">
    <source>
        <dbReference type="UniProtKB" id="Q9Y2Q5"/>
    </source>
</evidence>
<evidence type="ECO:0000305" key="3"/>
<organism>
    <name type="scientific">Xenopus laevis</name>
    <name type="common">African clawed frog</name>
    <dbReference type="NCBI Taxonomy" id="8355"/>
    <lineage>
        <taxon>Eukaryota</taxon>
        <taxon>Metazoa</taxon>
        <taxon>Chordata</taxon>
        <taxon>Craniata</taxon>
        <taxon>Vertebrata</taxon>
        <taxon>Euteleostomi</taxon>
        <taxon>Amphibia</taxon>
        <taxon>Batrachia</taxon>
        <taxon>Anura</taxon>
        <taxon>Pipoidea</taxon>
        <taxon>Pipidae</taxon>
        <taxon>Xenopodinae</taxon>
        <taxon>Xenopus</taxon>
        <taxon>Xenopus</taxon>
    </lineage>
</organism>
<comment type="function">
    <text evidence="2">As part of the Ragulator complex it is involved in amino acid sensing and activation of mTORC1, a signaling complex promoting cell growth in response to growth factors, energy levels, and amino acids. Activated by amino acids through a mechanism involving the lysosomal V-ATPase, the Ragulator plays a dual role for the small GTPases Rag (RagA/RRAGA, RagB/RRAGB, RagC/RRAGC and/or RagD/RRAGD): it (1) acts as a guanine nucleotide exchange factor (GEF), activating the small GTPases Rag and (2) mediates recruitment of Rag GTPases to the lysosome membrane. Activated Ragulator and Rag GTPases function as a scaffold recruiting mTORC1 to lysosomes where it is in turn activated.</text>
</comment>
<comment type="subunit">
    <text evidence="2">Part of the Ragulator complex composed of lamtor1, lamtor2, lamtor3, lamtor4 and lamtor5. The Ragulator complex interacts with slc38a9; the probable amino acid sensor. Component of the lysosomal folliculin complex (LFC).</text>
</comment>
<comment type="subcellular location">
    <subcellularLocation>
        <location evidence="1">Late endosome membrane</location>
        <topology evidence="1">Peripheral membrane protein</topology>
        <orientation evidence="1">Cytoplasmic side</orientation>
    </subcellularLocation>
    <subcellularLocation>
        <location evidence="1">Lysosome membrane</location>
        <topology evidence="1">Peripheral membrane protein</topology>
        <orientation evidence="1">Cytoplasmic side</orientation>
    </subcellularLocation>
    <text evidence="1">Recruited to lysosome and endosome membranes by LAMTOR1.</text>
</comment>
<comment type="similarity">
    <text evidence="3">Belongs to the GAMAD family.</text>
</comment>